<evidence type="ECO:0000250" key="1"/>
<evidence type="ECO:0000269" key="2">
    <source>
    </source>
</evidence>
<evidence type="ECO:0000303" key="3">
    <source>
    </source>
</evidence>
<evidence type="ECO:0000305" key="4"/>
<accession>Q6KZ25</accession>
<feature type="chain" id="PRO_0000415149" description="Glycerate 2-kinase">
    <location>
        <begin position="1"/>
        <end position="415"/>
    </location>
</feature>
<feature type="binding site" evidence="1">
    <location>
        <position position="57"/>
    </location>
    <ligand>
        <name>substrate</name>
    </ligand>
</feature>
<protein>
    <recommendedName>
        <fullName>Glycerate 2-kinase</fullName>
        <shortName>GCK</shortName>
        <ecNumber evidence="2">2.7.1.165</ecNumber>
    </recommendedName>
    <alternativeName>
        <fullName evidence="3">2-phosphoglycerate forming glycerate kinase</fullName>
    </alternativeName>
</protein>
<sequence length="415" mass="46644">MIENYNDIAITDTRRKILNIIDKTLIAMDPENAIKNFIEKNNIKFDSKRIFLIGFGKAAFKMYSGIRPFILKDLVYASIIVPDDEKTNDYNELRILRGTHPFTGDLSVSSSISMLSGLKNLNENDLVIVLISGGGSSLFEIPEDGINIDDIKNISKTMMDKGCDIYELNMVRSMLSKVKGGKLATMLYPARVISFIISDVKNDDLSIIASGPLTRIDYRIEDLMETIKKYLGNDERIKMYRNIDDIYFNNVKQYIILKNRDFLDYIYSNINDDAVNLGSNFSGNVEDLSLILHNILKNIYSSKRKPFYFMLGGETTVDVKGHGSGGRNQELVLRFMKNSSNSEVYTIASFGTDGIDGVSPAAGGIVDSDHEIDNINEYLNRNDSYNLLIKNHGAIITGRTGNNVSDIIIGLYYNK</sequence>
<reference key="1">
    <citation type="journal article" date="2004" name="Proc. Natl. Acad. Sci. U.S.A.">
        <title>Genome sequence of Picrophilus torridus and its implications for life around pH 0.</title>
        <authorList>
            <person name="Fuetterer O."/>
            <person name="Angelov A."/>
            <person name="Liesegang H."/>
            <person name="Gottschalk G."/>
            <person name="Schleper C."/>
            <person name="Schepers B."/>
            <person name="Dock C."/>
            <person name="Antranikian G."/>
            <person name="Liebl W."/>
        </authorList>
    </citation>
    <scope>NUCLEOTIDE SEQUENCE [LARGE SCALE GENOMIC DNA]</scope>
    <source>
        <strain>ATCC 700027 / DSM 9790 / JCM 10055 / NBRC 100828 / KAW 2/3</strain>
    </source>
</reference>
<reference key="2">
    <citation type="journal article" date="2006" name="FEMS Microbiol. Lett.">
        <title>Characterization of glycerate kinase (2-phosphoglycerate forming), a key enzyme of the nonphosphorylative Entner-Doudoroff pathway, from the thermoacidophilic euryarchaeon Picrophilus torridus.</title>
        <authorList>
            <person name="Reher M."/>
            <person name="Bott M."/>
            <person name="Schonheit P."/>
        </authorList>
    </citation>
    <scope>FUNCTION AS A GLYCERATE KINASE</scope>
    <scope>CATALYTIC ACTIVITY</scope>
    <scope>BIOPHYSICOCHEMICAL PROPERTIES</scope>
    <scope>COFACTOR</scope>
    <scope>SUBSTRATE SPECIFICITY</scope>
    <scope>SUBUNIT</scope>
    <scope>NOMENCLATURE</scope>
</reference>
<name>GCK_PICTO</name>
<proteinExistence type="evidence at protein level"/>
<keyword id="KW-0067">ATP-binding</keyword>
<keyword id="KW-0418">Kinase</keyword>
<keyword id="KW-0547">Nucleotide-binding</keyword>
<keyword id="KW-0808">Transferase</keyword>
<dbReference type="EC" id="2.7.1.165" evidence="2"/>
<dbReference type="EMBL" id="AE017261">
    <property type="protein sequence ID" value="AAT44027.1"/>
    <property type="molecule type" value="Genomic_DNA"/>
</dbReference>
<dbReference type="RefSeq" id="WP_011178243.1">
    <property type="nucleotide sequence ID" value="NC_005877.1"/>
</dbReference>
<dbReference type="SMR" id="Q6KZ25"/>
<dbReference type="FunCoup" id="Q6KZ25">
    <property type="interactions" value="109"/>
</dbReference>
<dbReference type="STRING" id="263820.PTO1442"/>
<dbReference type="PaxDb" id="263820-PTO1442"/>
<dbReference type="GeneID" id="2844855"/>
<dbReference type="KEGG" id="pto:PTO1442"/>
<dbReference type="PATRIC" id="fig|263820.9.peg.1496"/>
<dbReference type="eggNOG" id="arCOG04170">
    <property type="taxonomic scope" value="Archaea"/>
</dbReference>
<dbReference type="HOGENOM" id="CLU_032279_1_1_2"/>
<dbReference type="InParanoid" id="Q6KZ25"/>
<dbReference type="OrthoDB" id="10741at2157"/>
<dbReference type="SABIO-RK" id="Q6KZ25"/>
<dbReference type="Proteomes" id="UP000000438">
    <property type="component" value="Chromosome"/>
</dbReference>
<dbReference type="GO" id="GO:0005737">
    <property type="term" value="C:cytoplasm"/>
    <property type="evidence" value="ECO:0007669"/>
    <property type="project" value="TreeGrafter"/>
</dbReference>
<dbReference type="GO" id="GO:0005524">
    <property type="term" value="F:ATP binding"/>
    <property type="evidence" value="ECO:0007669"/>
    <property type="project" value="UniProtKB-KW"/>
</dbReference>
<dbReference type="GO" id="GO:0043798">
    <property type="term" value="F:glycerate 2-kinase activity"/>
    <property type="evidence" value="ECO:0000314"/>
    <property type="project" value="UniProtKB"/>
</dbReference>
<dbReference type="GO" id="GO:0008887">
    <property type="term" value="F:glycerate kinase activity"/>
    <property type="evidence" value="ECO:0007669"/>
    <property type="project" value="InterPro"/>
</dbReference>
<dbReference type="Gene3D" id="3.40.50.10180">
    <property type="entry name" value="Glycerate kinase, MOFRL-like N-terminal domain"/>
    <property type="match status" value="1"/>
</dbReference>
<dbReference type="Gene3D" id="3.40.1480.10">
    <property type="entry name" value="MOFRL domain"/>
    <property type="match status" value="1"/>
</dbReference>
<dbReference type="InterPro" id="IPR037035">
    <property type="entry name" value="GK-like_C_sf"/>
</dbReference>
<dbReference type="InterPro" id="IPR038614">
    <property type="entry name" value="GK_N_sf"/>
</dbReference>
<dbReference type="InterPro" id="IPR054996">
    <property type="entry name" value="Gly_kinase"/>
</dbReference>
<dbReference type="InterPro" id="IPR007835">
    <property type="entry name" value="MOFRL"/>
</dbReference>
<dbReference type="InterPro" id="IPR025286">
    <property type="entry name" value="MOFRL_assoc_dom"/>
</dbReference>
<dbReference type="InterPro" id="IPR039760">
    <property type="entry name" value="MOFRL_protein"/>
</dbReference>
<dbReference type="NCBIfam" id="NF040791">
    <property type="entry name" value="gly_kin_Thpl"/>
    <property type="match status" value="1"/>
</dbReference>
<dbReference type="PANTHER" id="PTHR12227">
    <property type="entry name" value="GLYCERATE KINASE"/>
    <property type="match status" value="1"/>
</dbReference>
<dbReference type="PANTHER" id="PTHR12227:SF0">
    <property type="entry name" value="GLYCERATE KINASE"/>
    <property type="match status" value="1"/>
</dbReference>
<dbReference type="Pfam" id="PF13660">
    <property type="entry name" value="DUF4147"/>
    <property type="match status" value="1"/>
</dbReference>
<dbReference type="Pfam" id="PF05161">
    <property type="entry name" value="MOFRL"/>
    <property type="match status" value="1"/>
</dbReference>
<dbReference type="SUPFAM" id="SSF82544">
    <property type="entry name" value="GckA/TtuD-like"/>
    <property type="match status" value="1"/>
</dbReference>
<comment type="function">
    <text evidence="2">Catalyzes the ATP-dependent phosphorylation of D-glycerate to 2-phosphoglycerate. It can also partially utilize GTP, CTP or UTP as phosphate donor.</text>
</comment>
<comment type="catalytic activity">
    <reaction evidence="2">
        <text>(R)-glycerate + ATP = (2R)-2-phosphoglycerate + ADP + H(+)</text>
        <dbReference type="Rhea" id="RHEA:27377"/>
        <dbReference type="ChEBI" id="CHEBI:15378"/>
        <dbReference type="ChEBI" id="CHEBI:16659"/>
        <dbReference type="ChEBI" id="CHEBI:30616"/>
        <dbReference type="ChEBI" id="CHEBI:58289"/>
        <dbReference type="ChEBI" id="CHEBI:456216"/>
        <dbReference type="EC" id="2.7.1.165"/>
    </reaction>
</comment>
<comment type="cofactor">
    <cofactor evidence="2">
        <name>Mg(2+)</name>
        <dbReference type="ChEBI" id="CHEBI:18420"/>
    </cofactor>
    <cofactor evidence="2">
        <name>Ni(2+)</name>
        <dbReference type="ChEBI" id="CHEBI:49786"/>
    </cofactor>
    <cofactor evidence="2">
        <name>Mn(2+)</name>
        <dbReference type="ChEBI" id="CHEBI:29035"/>
    </cofactor>
    <cofactor evidence="2">
        <name>Co(2+)</name>
        <dbReference type="ChEBI" id="CHEBI:48828"/>
    </cofactor>
    <text evidence="2">Magnesium. It could be replaced to some extent by nickel, manganese or cobalt.</text>
</comment>
<comment type="biophysicochemical properties">
    <kinetics>
        <KM evidence="2">340 uM for glycerate (at 50 degrees Celsius and at pH 7.3)</KM>
        <KM evidence="2">500 uM for ATP (at 50 degrees Celsius and at pH 7.3)</KM>
        <Vmax evidence="2">435.0 umol/min/mg enzyme (at 50 degrees Celsius and at pH 7.3)</Vmax>
    </kinetics>
    <phDependence>
        <text evidence="2">Optimum pH is 7.3 and 50% of activity at pH 5.6 and at pH 8.6.</text>
    </phDependence>
    <temperatureDependence>
        <text evidence="2">Optimum temperature is 60 degrees Celsius. It does not lose activity upon incubation at 60 degrees Celsius for 2 h. The half time at 70 degrees Celsius is about 5 minutes.</text>
    </temperatureDependence>
</comment>
<comment type="subunit">
    <text evidence="2">Homodimer.</text>
</comment>
<comment type="similarity">
    <text evidence="4">Belongs to the glycerate kinase type-1 family.</text>
</comment>
<gene>
    <name type="primary">gck</name>
    <name type="ordered locus">PTO1442</name>
</gene>
<organism>
    <name type="scientific">Picrophilus torridus (strain ATCC 700027 / DSM 9790 / JCM 10055 / NBRC 100828 / KAW 2/3)</name>
    <dbReference type="NCBI Taxonomy" id="1122961"/>
    <lineage>
        <taxon>Archaea</taxon>
        <taxon>Methanobacteriati</taxon>
        <taxon>Thermoplasmatota</taxon>
        <taxon>Thermoplasmata</taxon>
        <taxon>Thermoplasmatales</taxon>
        <taxon>Picrophilaceae</taxon>
        <taxon>Picrophilus</taxon>
    </lineage>
</organism>